<feature type="chain" id="PRO_0000427262" description="ATP-dependent DNA helicase RecG">
    <location>
        <begin position="1"/>
        <end position="737"/>
    </location>
</feature>
<feature type="domain" description="Helicase ATP-binding" evidence="3">
    <location>
        <begin position="302"/>
        <end position="477"/>
    </location>
</feature>
<feature type="domain" description="Helicase C-terminal" evidence="4">
    <location>
        <begin position="514"/>
        <end position="673"/>
    </location>
</feature>
<feature type="region of interest" description="Wedge domain" evidence="2">
    <location>
        <begin position="44"/>
        <end position="171"/>
    </location>
</feature>
<feature type="short sequence motif" description="DEAH box" evidence="3">
    <location>
        <begin position="427"/>
        <end position="430"/>
    </location>
</feature>
<feature type="binding site" evidence="3">
    <location>
        <begin position="315"/>
        <end position="322"/>
    </location>
    <ligand>
        <name>ATP</name>
        <dbReference type="ChEBI" id="CHEBI:30616"/>
    </ligand>
</feature>
<organism>
    <name type="scientific">Mycobacterium tuberculosis (strain CDC 1551 / Oshkosh)</name>
    <dbReference type="NCBI Taxonomy" id="83331"/>
    <lineage>
        <taxon>Bacteria</taxon>
        <taxon>Bacillati</taxon>
        <taxon>Actinomycetota</taxon>
        <taxon>Actinomycetes</taxon>
        <taxon>Mycobacteriales</taxon>
        <taxon>Mycobacteriaceae</taxon>
        <taxon>Mycobacterium</taxon>
        <taxon>Mycobacterium tuberculosis complex</taxon>
    </lineage>
</organism>
<dbReference type="EC" id="5.6.2.4" evidence="1"/>
<dbReference type="EMBL" id="AE000516">
    <property type="protein sequence ID" value="AAK47377.1"/>
    <property type="molecule type" value="Genomic_DNA"/>
</dbReference>
<dbReference type="PIR" id="B70672">
    <property type="entry name" value="B70672"/>
</dbReference>
<dbReference type="RefSeq" id="WP_003415026.1">
    <property type="nucleotide sequence ID" value="NZ_KK341227.1"/>
</dbReference>
<dbReference type="SMR" id="P9WMQ6"/>
<dbReference type="KEGG" id="mtc:MT3051"/>
<dbReference type="PATRIC" id="fig|83331.31.peg.3293"/>
<dbReference type="HOGENOM" id="CLU_005122_7_1_11"/>
<dbReference type="Proteomes" id="UP000001020">
    <property type="component" value="Chromosome"/>
</dbReference>
<dbReference type="GO" id="GO:0005524">
    <property type="term" value="F:ATP binding"/>
    <property type="evidence" value="ECO:0007669"/>
    <property type="project" value="UniProtKB-KW"/>
</dbReference>
<dbReference type="GO" id="GO:0016887">
    <property type="term" value="F:ATP hydrolysis activity"/>
    <property type="evidence" value="ECO:0007669"/>
    <property type="project" value="RHEA"/>
</dbReference>
<dbReference type="GO" id="GO:0003677">
    <property type="term" value="F:DNA binding"/>
    <property type="evidence" value="ECO:0007669"/>
    <property type="project" value="UniProtKB-KW"/>
</dbReference>
<dbReference type="GO" id="GO:0003678">
    <property type="term" value="F:DNA helicase activity"/>
    <property type="evidence" value="ECO:0007669"/>
    <property type="project" value="InterPro"/>
</dbReference>
<dbReference type="GO" id="GO:0006310">
    <property type="term" value="P:DNA recombination"/>
    <property type="evidence" value="ECO:0007669"/>
    <property type="project" value="UniProtKB-KW"/>
</dbReference>
<dbReference type="GO" id="GO:0006281">
    <property type="term" value="P:DNA repair"/>
    <property type="evidence" value="ECO:0007669"/>
    <property type="project" value="UniProtKB-KW"/>
</dbReference>
<dbReference type="CDD" id="cd17992">
    <property type="entry name" value="DEXHc_RecG"/>
    <property type="match status" value="1"/>
</dbReference>
<dbReference type="CDD" id="cd04488">
    <property type="entry name" value="RecG_wedge_OBF"/>
    <property type="match status" value="1"/>
</dbReference>
<dbReference type="FunFam" id="3.40.50.300:FF:000391">
    <property type="entry name" value="ATP-dependent DNA helicase RecG"/>
    <property type="match status" value="1"/>
</dbReference>
<dbReference type="Gene3D" id="2.40.50.140">
    <property type="entry name" value="Nucleic acid-binding proteins"/>
    <property type="match status" value="1"/>
</dbReference>
<dbReference type="Gene3D" id="3.40.50.300">
    <property type="entry name" value="P-loop containing nucleotide triphosphate hydrolases"/>
    <property type="match status" value="2"/>
</dbReference>
<dbReference type="InterPro" id="IPR004609">
    <property type="entry name" value="ATP-dep_DNA_helicase_RecG"/>
</dbReference>
<dbReference type="InterPro" id="IPR011545">
    <property type="entry name" value="DEAD/DEAH_box_helicase_dom"/>
</dbReference>
<dbReference type="InterPro" id="IPR014001">
    <property type="entry name" value="Helicase_ATP-bd"/>
</dbReference>
<dbReference type="InterPro" id="IPR001650">
    <property type="entry name" value="Helicase_C-like"/>
</dbReference>
<dbReference type="InterPro" id="IPR012340">
    <property type="entry name" value="NA-bd_OB-fold"/>
</dbReference>
<dbReference type="InterPro" id="IPR027417">
    <property type="entry name" value="P-loop_NTPase"/>
</dbReference>
<dbReference type="InterPro" id="IPR047112">
    <property type="entry name" value="RecG/Mfd"/>
</dbReference>
<dbReference type="InterPro" id="IPR033454">
    <property type="entry name" value="RecG_wedge"/>
</dbReference>
<dbReference type="NCBIfam" id="NF008167">
    <property type="entry name" value="PRK10917.2-1"/>
    <property type="match status" value="1"/>
</dbReference>
<dbReference type="NCBIfam" id="TIGR00643">
    <property type="entry name" value="recG"/>
    <property type="match status" value="1"/>
</dbReference>
<dbReference type="PANTHER" id="PTHR47964">
    <property type="entry name" value="ATP-DEPENDENT DNA HELICASE HOMOLOG RECG, CHLOROPLASTIC"/>
    <property type="match status" value="1"/>
</dbReference>
<dbReference type="PANTHER" id="PTHR47964:SF1">
    <property type="entry name" value="ATP-DEPENDENT DNA HELICASE HOMOLOG RECG, CHLOROPLASTIC"/>
    <property type="match status" value="1"/>
</dbReference>
<dbReference type="Pfam" id="PF00270">
    <property type="entry name" value="DEAD"/>
    <property type="match status" value="1"/>
</dbReference>
<dbReference type="Pfam" id="PF00271">
    <property type="entry name" value="Helicase_C"/>
    <property type="match status" value="1"/>
</dbReference>
<dbReference type="Pfam" id="PF17191">
    <property type="entry name" value="RecG_wedge"/>
    <property type="match status" value="1"/>
</dbReference>
<dbReference type="SMART" id="SM00487">
    <property type="entry name" value="DEXDc"/>
    <property type="match status" value="1"/>
</dbReference>
<dbReference type="SMART" id="SM00490">
    <property type="entry name" value="HELICc"/>
    <property type="match status" value="1"/>
</dbReference>
<dbReference type="SUPFAM" id="SSF50249">
    <property type="entry name" value="Nucleic acid-binding proteins"/>
    <property type="match status" value="1"/>
</dbReference>
<dbReference type="SUPFAM" id="SSF52540">
    <property type="entry name" value="P-loop containing nucleoside triphosphate hydrolases"/>
    <property type="match status" value="2"/>
</dbReference>
<dbReference type="PROSITE" id="PS51192">
    <property type="entry name" value="HELICASE_ATP_BIND_1"/>
    <property type="match status" value="1"/>
</dbReference>
<dbReference type="PROSITE" id="PS51194">
    <property type="entry name" value="HELICASE_CTER"/>
    <property type="match status" value="1"/>
</dbReference>
<keyword id="KW-0067">ATP-binding</keyword>
<keyword id="KW-0227">DNA damage</keyword>
<keyword id="KW-0233">DNA recombination</keyword>
<keyword id="KW-0234">DNA repair</keyword>
<keyword id="KW-0238">DNA-binding</keyword>
<keyword id="KW-0347">Helicase</keyword>
<keyword id="KW-0378">Hydrolase</keyword>
<keyword id="KW-0413">Isomerase</keyword>
<keyword id="KW-0547">Nucleotide-binding</keyword>
<keyword id="KW-1185">Reference proteome</keyword>
<accession>P9WMQ6</accession>
<accession>L0TDY0</accession>
<accession>P64322</accession>
<accession>P95122</accession>
<proteinExistence type="inferred from homology"/>
<reference key="1">
    <citation type="journal article" date="2002" name="J. Bacteriol.">
        <title>Whole-genome comparison of Mycobacterium tuberculosis clinical and laboratory strains.</title>
        <authorList>
            <person name="Fleischmann R.D."/>
            <person name="Alland D."/>
            <person name="Eisen J.A."/>
            <person name="Carpenter L."/>
            <person name="White O."/>
            <person name="Peterson J.D."/>
            <person name="DeBoy R.T."/>
            <person name="Dodson R.J."/>
            <person name="Gwinn M.L."/>
            <person name="Haft D.H."/>
            <person name="Hickey E.K."/>
            <person name="Kolonay J.F."/>
            <person name="Nelson W.C."/>
            <person name="Umayam L.A."/>
            <person name="Ermolaeva M.D."/>
            <person name="Salzberg S.L."/>
            <person name="Delcher A."/>
            <person name="Utterback T.R."/>
            <person name="Weidman J.F."/>
            <person name="Khouri H.M."/>
            <person name="Gill J."/>
            <person name="Mikula A."/>
            <person name="Bishai W."/>
            <person name="Jacobs W.R. Jr."/>
            <person name="Venter J.C."/>
            <person name="Fraser C.M."/>
        </authorList>
    </citation>
    <scope>NUCLEOTIDE SEQUENCE [LARGE SCALE GENOMIC DNA]</scope>
    <source>
        <strain>CDC 1551 / Oshkosh</strain>
    </source>
</reference>
<name>RECG_MYCTO</name>
<comment type="function">
    <text evidence="1">Plays a critical role in recombination and DNA repair. Helps process Holliday junction intermediates to mature products by catalyzing branch migration. Has replication fork regression activity, unwinds stalled or blocked replication forks to make a HJ that can be resolved. Has a DNA unwinding activity characteristic of a DNA helicase with 3'-5' polarity (By similarity).</text>
</comment>
<comment type="catalytic activity">
    <reaction evidence="1">
        <text>Couples ATP hydrolysis with the unwinding of duplex DNA by translocating in the 3'-5' direction.</text>
        <dbReference type="EC" id="5.6.2.4"/>
    </reaction>
</comment>
<comment type="catalytic activity">
    <reaction evidence="1">
        <text>ATP + H2O = ADP + phosphate + H(+)</text>
        <dbReference type="Rhea" id="RHEA:13065"/>
        <dbReference type="ChEBI" id="CHEBI:15377"/>
        <dbReference type="ChEBI" id="CHEBI:15378"/>
        <dbReference type="ChEBI" id="CHEBI:30616"/>
        <dbReference type="ChEBI" id="CHEBI:43474"/>
        <dbReference type="ChEBI" id="CHEBI:456216"/>
        <dbReference type="EC" id="5.6.2.4"/>
    </reaction>
</comment>
<comment type="subunit">
    <text evidence="2">Monomer (By similarity).</text>
</comment>
<comment type="domain">
    <text evidence="2">The wedge domain within the N-terminus inserts into the replication fork junction, where the lagging and leading strand split (By similarity).</text>
</comment>
<comment type="similarity">
    <text evidence="5">Belongs to the helicase family. RecG subfamily.</text>
</comment>
<sequence length="737" mass="80361">MASLSDRLDRVLGATAADALDEQFGMRTVDDLLRHYPRSYVEGAARVGIGDARPEAGEHITIVDVITDTYSFPMKKKPNRKCLRITVGGGRNKVTATFFNADYIMRDLTKHTKVMLSGEVGYYKGAMQLTHPAFLILDSPDGKNHGTRSLKSIADASKAISGELVVEEFERRFFPIYPASTKVQSWDIFKCVRQVLDVLDRVDDPLPAELRAKHGLIPEDEALRAIHLAESQSLRERARERLTFDEAVGLQWALVARRHGELSESGPSAAWKSNGLAAELLRRLPFELTAGQREVLDVLSDGLAANRPLNRLLQGEVGSGKTIVAVLAMLQMVDAGYQCALLAPTEVLAAQHLRSIRDVLGPLAMGGQLGGAENATRVALLTGSMTAGQKKQVRAEIASGQVGIVIGTHALLQEAVDFHNLGMVVVDEQHRFGVEQRDQLRAKAPAGITPHLLVMTATPIPRTVALTVYGDLETSTLRELPLGRQPIATNVIFVKDKPAWLDRAWRRIIEEAAAGRQAYVVAPRIDESDDTDVQGGVRPSATAEGLFSRLRSAELAELRLALMHGRLSADDKDAAMAAFRAGEVDVLVCTTVIEVGVDVPNATVMLVMDADRFGISQLHQLRGRIGRGEHPSVCLLASWVPPDTPAGQRLRAVAGTMDGFALADLDLKERKEGDVLGRNQSGKAITLRLLSLAEHEEYIVAARDFCIEAYKNPTDPALALMAARFTSTDRIEYLDKS</sequence>
<gene>
    <name type="primary">recG</name>
    <name type="ordered locus">MT3051</name>
</gene>
<evidence type="ECO:0000250" key="1">
    <source>
        <dbReference type="UniProtKB" id="P24230"/>
    </source>
</evidence>
<evidence type="ECO:0000250" key="2">
    <source>
        <dbReference type="UniProtKB" id="Q9WY48"/>
    </source>
</evidence>
<evidence type="ECO:0000255" key="3">
    <source>
        <dbReference type="PROSITE-ProRule" id="PRU00541"/>
    </source>
</evidence>
<evidence type="ECO:0000255" key="4">
    <source>
        <dbReference type="PROSITE-ProRule" id="PRU00542"/>
    </source>
</evidence>
<evidence type="ECO:0000305" key="5"/>
<protein>
    <recommendedName>
        <fullName>ATP-dependent DNA helicase RecG</fullName>
        <ecNumber evidence="1">5.6.2.4</ecNumber>
    </recommendedName>
    <alternativeName>
        <fullName>DNA branch migration protein RecG</fullName>
    </alternativeName>
    <alternativeName>
        <fullName>Probable DNA 3'-5' helicase RecG</fullName>
    </alternativeName>
</protein>